<reference key="1">
    <citation type="journal article" date="2002" name="Nature">
        <title>The genome sequence of Schizosaccharomyces pombe.</title>
        <authorList>
            <person name="Wood V."/>
            <person name="Gwilliam R."/>
            <person name="Rajandream M.A."/>
            <person name="Lyne M.H."/>
            <person name="Lyne R."/>
            <person name="Stewart A."/>
            <person name="Sgouros J.G."/>
            <person name="Peat N."/>
            <person name="Hayles J."/>
            <person name="Baker S.G."/>
            <person name="Basham D."/>
            <person name="Bowman S."/>
            <person name="Brooks K."/>
            <person name="Brown D."/>
            <person name="Brown S."/>
            <person name="Chillingworth T."/>
            <person name="Churcher C.M."/>
            <person name="Collins M."/>
            <person name="Connor R."/>
            <person name="Cronin A."/>
            <person name="Davis P."/>
            <person name="Feltwell T."/>
            <person name="Fraser A."/>
            <person name="Gentles S."/>
            <person name="Goble A."/>
            <person name="Hamlin N."/>
            <person name="Harris D.E."/>
            <person name="Hidalgo J."/>
            <person name="Hodgson G."/>
            <person name="Holroyd S."/>
            <person name="Hornsby T."/>
            <person name="Howarth S."/>
            <person name="Huckle E.J."/>
            <person name="Hunt S."/>
            <person name="Jagels K."/>
            <person name="James K.D."/>
            <person name="Jones L."/>
            <person name="Jones M."/>
            <person name="Leather S."/>
            <person name="McDonald S."/>
            <person name="McLean J."/>
            <person name="Mooney P."/>
            <person name="Moule S."/>
            <person name="Mungall K.L."/>
            <person name="Murphy L.D."/>
            <person name="Niblett D."/>
            <person name="Odell C."/>
            <person name="Oliver K."/>
            <person name="O'Neil S."/>
            <person name="Pearson D."/>
            <person name="Quail M.A."/>
            <person name="Rabbinowitsch E."/>
            <person name="Rutherford K.M."/>
            <person name="Rutter S."/>
            <person name="Saunders D."/>
            <person name="Seeger K."/>
            <person name="Sharp S."/>
            <person name="Skelton J."/>
            <person name="Simmonds M.N."/>
            <person name="Squares R."/>
            <person name="Squares S."/>
            <person name="Stevens K."/>
            <person name="Taylor K."/>
            <person name="Taylor R.G."/>
            <person name="Tivey A."/>
            <person name="Walsh S.V."/>
            <person name="Warren T."/>
            <person name="Whitehead S."/>
            <person name="Woodward J.R."/>
            <person name="Volckaert G."/>
            <person name="Aert R."/>
            <person name="Robben J."/>
            <person name="Grymonprez B."/>
            <person name="Weltjens I."/>
            <person name="Vanstreels E."/>
            <person name="Rieger M."/>
            <person name="Schaefer M."/>
            <person name="Mueller-Auer S."/>
            <person name="Gabel C."/>
            <person name="Fuchs M."/>
            <person name="Duesterhoeft A."/>
            <person name="Fritzc C."/>
            <person name="Holzer E."/>
            <person name="Moestl D."/>
            <person name="Hilbert H."/>
            <person name="Borzym K."/>
            <person name="Langer I."/>
            <person name="Beck A."/>
            <person name="Lehrach H."/>
            <person name="Reinhardt R."/>
            <person name="Pohl T.M."/>
            <person name="Eger P."/>
            <person name="Zimmermann W."/>
            <person name="Wedler H."/>
            <person name="Wambutt R."/>
            <person name="Purnelle B."/>
            <person name="Goffeau A."/>
            <person name="Cadieu E."/>
            <person name="Dreano S."/>
            <person name="Gloux S."/>
            <person name="Lelaure V."/>
            <person name="Mottier S."/>
            <person name="Galibert F."/>
            <person name="Aves S.J."/>
            <person name="Xiang Z."/>
            <person name="Hunt C."/>
            <person name="Moore K."/>
            <person name="Hurst S.M."/>
            <person name="Lucas M."/>
            <person name="Rochet M."/>
            <person name="Gaillardin C."/>
            <person name="Tallada V.A."/>
            <person name="Garzon A."/>
            <person name="Thode G."/>
            <person name="Daga R.R."/>
            <person name="Cruzado L."/>
            <person name="Jimenez J."/>
            <person name="Sanchez M."/>
            <person name="del Rey F."/>
            <person name="Benito J."/>
            <person name="Dominguez A."/>
            <person name="Revuelta J.L."/>
            <person name="Moreno S."/>
            <person name="Armstrong J."/>
            <person name="Forsburg S.L."/>
            <person name="Cerutti L."/>
            <person name="Lowe T."/>
            <person name="McCombie W.R."/>
            <person name="Paulsen I."/>
            <person name="Potashkin J."/>
            <person name="Shpakovski G.V."/>
            <person name="Ussery D."/>
            <person name="Barrell B.G."/>
            <person name="Nurse P."/>
        </authorList>
    </citation>
    <scope>NUCLEOTIDE SEQUENCE [LARGE SCALE GENOMIC DNA]</scope>
    <source>
        <strain>972 / ATCC 24843</strain>
    </source>
</reference>
<reference key="2">
    <citation type="journal article" date="2011" name="Science">
        <title>Comparative functional genomics of the fission yeasts.</title>
        <authorList>
            <person name="Rhind N."/>
            <person name="Chen Z."/>
            <person name="Yassour M."/>
            <person name="Thompson D.A."/>
            <person name="Haas B.J."/>
            <person name="Habib N."/>
            <person name="Wapinski I."/>
            <person name="Roy S."/>
            <person name="Lin M.F."/>
            <person name="Heiman D.I."/>
            <person name="Young S.K."/>
            <person name="Furuya K."/>
            <person name="Guo Y."/>
            <person name="Pidoux A."/>
            <person name="Chen H.M."/>
            <person name="Robbertse B."/>
            <person name="Goldberg J.M."/>
            <person name="Aoki K."/>
            <person name="Bayne E.H."/>
            <person name="Berlin A.M."/>
            <person name="Desjardins C.A."/>
            <person name="Dobbs E."/>
            <person name="Dukaj L."/>
            <person name="Fan L."/>
            <person name="FitzGerald M.G."/>
            <person name="French C."/>
            <person name="Gujja S."/>
            <person name="Hansen K."/>
            <person name="Keifenheim D."/>
            <person name="Levin J.Z."/>
            <person name="Mosher R.A."/>
            <person name="Mueller C.A."/>
            <person name="Pfiffner J."/>
            <person name="Priest M."/>
            <person name="Russ C."/>
            <person name="Smialowska A."/>
            <person name="Swoboda P."/>
            <person name="Sykes S.M."/>
            <person name="Vaughn M."/>
            <person name="Vengrova S."/>
            <person name="Yoder R."/>
            <person name="Zeng Q."/>
            <person name="Allshire R."/>
            <person name="Baulcombe D."/>
            <person name="Birren B.W."/>
            <person name="Brown W."/>
            <person name="Ekwall K."/>
            <person name="Kellis M."/>
            <person name="Leatherwood J."/>
            <person name="Levin H."/>
            <person name="Margalit H."/>
            <person name="Martienssen R."/>
            <person name="Nieduszynski C.A."/>
            <person name="Spatafora J.W."/>
            <person name="Friedman N."/>
            <person name="Dalgaard J.Z."/>
            <person name="Baumann P."/>
            <person name="Niki H."/>
            <person name="Regev A."/>
            <person name="Nusbaum C."/>
        </authorList>
    </citation>
    <scope>REVISION OF GENE MODEL</scope>
</reference>
<reference key="3">
    <citation type="journal article" date="2000" name="Genes Cells">
        <title>Large-scale screening of intracellular protein localization in living fission yeast cells by the use of a GFP-fusion genomic DNA library.</title>
        <authorList>
            <person name="Ding D.-Q."/>
            <person name="Tomita Y."/>
            <person name="Yamamoto A."/>
            <person name="Chikashige Y."/>
            <person name="Haraguchi T."/>
            <person name="Hiraoka Y."/>
        </authorList>
    </citation>
    <scope>NUCLEOTIDE SEQUENCE [LARGE SCALE GENOMIC DNA] OF 1-84</scope>
    <scope>SUBCELLULAR LOCATION</scope>
    <source>
        <strain>ATCC 38364 / 968</strain>
    </source>
</reference>
<reference key="4">
    <citation type="journal article" date="2006" name="Nat. Biotechnol.">
        <title>ORFeome cloning and global analysis of protein localization in the fission yeast Schizosaccharomyces pombe.</title>
        <authorList>
            <person name="Matsuyama A."/>
            <person name="Arai R."/>
            <person name="Yashiroda Y."/>
            <person name="Shirai A."/>
            <person name="Kamata A."/>
            <person name="Sekido S."/>
            <person name="Kobayashi Y."/>
            <person name="Hashimoto A."/>
            <person name="Hamamoto M."/>
            <person name="Hiraoka Y."/>
            <person name="Horinouchi S."/>
            <person name="Yoshida M."/>
        </authorList>
    </citation>
    <scope>SUBCELLULAR LOCATION [LARGE SCALE ANALYSIS]</scope>
</reference>
<reference key="5">
    <citation type="journal article" date="2014" name="Nucleic Acids Res.">
        <title>Tls1 regulates splicing of shelterin components to control telomeric heterochromatin assembly and telomere length.</title>
        <authorList>
            <person name="Wang J."/>
            <person name="Tadeo X."/>
            <person name="Hou H."/>
            <person name="Andrews S."/>
            <person name="Moresco J.J."/>
            <person name="Yates J.R. III"/>
            <person name="Nagy P.L."/>
            <person name="Jia S."/>
        </authorList>
    </citation>
    <scope>FUNCTION</scope>
    <scope>IDENTIFICATION IN THE SPLICEOSOME COMPLEX</scope>
    <scope>INTERACTION WITH BRR2</scope>
</reference>
<reference key="6">
    <citation type="journal article" date="2022" name="Nucleic Acids Res.">
        <title>Splicing of branchpoint-distant exons is promoted by Cactin, Tls1 and the ubiquitin-fold-activated Sde2.</title>
        <authorList>
            <person name="Anil A.T."/>
            <person name="Choudhary K."/>
            <person name="Pandian R."/>
            <person name="Gupta P."/>
            <person name="Thakran P."/>
            <person name="Singh A."/>
            <person name="Sharma M."/>
            <person name="Mishra S.K."/>
        </authorList>
    </citation>
    <scope>FUNCTION</scope>
    <scope>DISRUPTION PHENOTYPE</scope>
</reference>
<name>TLS1_SCHPO</name>
<gene>
    <name evidence="5" type="primary">tls1</name>
    <name type="ORF">SPAC1D4.01</name>
    <name type="ORF">SPAC1F3.11</name>
</gene>
<sequence length="254" mass="29446">MNSIHIKKKSNRSFRRRKVFGNEKEFDLEELDDNDIRLRQALEATKRRKIRNSIIGINAEKLLNQETKKEKQLNTANEPHEANDQTSAQSSKLIEAQLPTVEDRFAKQTNEVDINTHLLNFVEKKLKQERLAQNYSENGETNALNTKNESTVQNIKNSLHPNEHSFIRDAAALGAIREVDLGIISTDVDNLKNGRKRQKKRARMKEKLDSKALRTSEDAARDEFIEKMLKPISQDEESKGIYRRFRVYKDGTQD</sequence>
<comment type="function">
    <text evidence="3 4">Plays a role in pre-mRNA splicing by facilitating excision of introns featuring long spacing between the branchpoint and 3'-splice site (PubMed:36095128). Assists the splicing of several components involved in chromatin organization, such as several shelterin complex subunits (PubMed:25245948, PubMed:36095128).</text>
</comment>
<comment type="subunit">
    <text evidence="3">Component of the spliceosome (PubMed:25245948). Interacts with brr2 (PubMed:25245948).</text>
</comment>
<comment type="subcellular location">
    <subcellularLocation>
        <location evidence="2">Cytoplasm</location>
    </subcellularLocation>
    <subcellularLocation>
        <location evidence="2">Nucleus</location>
    </subcellularLocation>
</comment>
<comment type="disruption phenotype">
    <text evidence="4">Leads to abnormal splicing of introns featuring long spacing between the branchpoint and 3'-splice site (PubMed:36095128). Decreases protein level of genes involved in chromatin organization (PubMed:36095128). Sensitive to cold; simultaneous knockout of cay1 or sde2 leads to a growth defect at both higher and lower temperature (PubMed:36095128).</text>
</comment>
<comment type="similarity">
    <text evidence="6">Belongs to the TLS1 family.</text>
</comment>
<comment type="sequence caution" evidence="6">
    <conflict type="erroneous initiation">
        <sequence resource="EMBL-CDS" id="BAA87273"/>
    </conflict>
    <text>Extended N-terminus.</text>
</comment>
<accession>Q10148</accession>
<accession>Q9UTV7</accession>
<organism>
    <name type="scientific">Schizosaccharomyces pombe (strain 972 / ATCC 24843)</name>
    <name type="common">Fission yeast</name>
    <dbReference type="NCBI Taxonomy" id="284812"/>
    <lineage>
        <taxon>Eukaryota</taxon>
        <taxon>Fungi</taxon>
        <taxon>Dikarya</taxon>
        <taxon>Ascomycota</taxon>
        <taxon>Taphrinomycotina</taxon>
        <taxon>Schizosaccharomycetes</taxon>
        <taxon>Schizosaccharomycetales</taxon>
        <taxon>Schizosaccharomycetaceae</taxon>
        <taxon>Schizosaccharomyces</taxon>
    </lineage>
</organism>
<evidence type="ECO:0000256" key="1">
    <source>
        <dbReference type="SAM" id="MobiDB-lite"/>
    </source>
</evidence>
<evidence type="ECO:0000269" key="2">
    <source>
    </source>
</evidence>
<evidence type="ECO:0000269" key="3">
    <source>
    </source>
</evidence>
<evidence type="ECO:0000269" key="4">
    <source>
    </source>
</evidence>
<evidence type="ECO:0000303" key="5">
    <source>
    </source>
</evidence>
<evidence type="ECO:0000305" key="6"/>
<evidence type="ECO:0000312" key="7">
    <source>
        <dbReference type="PomBase" id="SPAC1D4.01"/>
    </source>
</evidence>
<dbReference type="EMBL" id="CU329670">
    <property type="protein sequence ID" value="CAA94629.3"/>
    <property type="molecule type" value="Genomic_DNA"/>
</dbReference>
<dbReference type="EMBL" id="AB027969">
    <property type="protein sequence ID" value="BAA87273.1"/>
    <property type="status" value="ALT_INIT"/>
    <property type="molecule type" value="Genomic_DNA"/>
</dbReference>
<dbReference type="PIR" id="T38042">
    <property type="entry name" value="T38042"/>
</dbReference>
<dbReference type="RefSeq" id="XP_001713042.2">
    <property type="nucleotide sequence ID" value="XM_001712990.2"/>
</dbReference>
<dbReference type="SMR" id="Q10148"/>
<dbReference type="BioGRID" id="857999">
    <property type="interactions" value="56"/>
</dbReference>
<dbReference type="FunCoup" id="Q10148">
    <property type="interactions" value="27"/>
</dbReference>
<dbReference type="STRING" id="284812.Q10148"/>
<dbReference type="iPTMnet" id="Q10148"/>
<dbReference type="PaxDb" id="4896-SPAC1D4.01.1"/>
<dbReference type="EnsemblFungi" id="SPAC1D4.01.1">
    <property type="protein sequence ID" value="SPAC1D4.01.1:pep"/>
    <property type="gene ID" value="SPAC1D4.01"/>
</dbReference>
<dbReference type="PomBase" id="SPAC1D4.01">
    <property type="gene designation" value="tls1"/>
</dbReference>
<dbReference type="VEuPathDB" id="FungiDB:SPAC1D4.01"/>
<dbReference type="HOGENOM" id="CLU_1195470_0_0_1"/>
<dbReference type="InParanoid" id="Q10148"/>
<dbReference type="OMA" id="NEPHEAN"/>
<dbReference type="PRO" id="PR:Q10148"/>
<dbReference type="Proteomes" id="UP000002485">
    <property type="component" value="Chromosome I"/>
</dbReference>
<dbReference type="GO" id="GO:0005829">
    <property type="term" value="C:cytosol"/>
    <property type="evidence" value="ECO:0007005"/>
    <property type="project" value="PomBase"/>
</dbReference>
<dbReference type="GO" id="GO:0005634">
    <property type="term" value="C:nucleus"/>
    <property type="evidence" value="ECO:0007005"/>
    <property type="project" value="PomBase"/>
</dbReference>
<dbReference type="GO" id="GO:0005681">
    <property type="term" value="C:spliceosomal complex"/>
    <property type="evidence" value="ECO:0000314"/>
    <property type="project" value="PomBase"/>
</dbReference>
<dbReference type="GO" id="GO:0000380">
    <property type="term" value="P:alternative mRNA splicing, via spliceosome"/>
    <property type="evidence" value="ECO:0000315"/>
    <property type="project" value="PomBase"/>
</dbReference>
<dbReference type="GO" id="GO:0045292">
    <property type="term" value="P:mRNA cis splicing, via spliceosome"/>
    <property type="evidence" value="ECO:0000315"/>
    <property type="project" value="PomBase"/>
</dbReference>
<dbReference type="GO" id="GO:0000398">
    <property type="term" value="P:mRNA splicing, via spliceosome"/>
    <property type="evidence" value="ECO:0000318"/>
    <property type="project" value="GO_Central"/>
</dbReference>
<dbReference type="InterPro" id="IPR010756">
    <property type="entry name" value="Tls1-like"/>
</dbReference>
<dbReference type="PANTHER" id="PTHR13486:SF2">
    <property type="entry name" value="SPLICING FACTOR C9ORF78"/>
    <property type="match status" value="1"/>
</dbReference>
<dbReference type="PANTHER" id="PTHR13486">
    <property type="entry name" value="TELOMERE LENGTH AND SILENCING PROTEIN 1 TLS1 FAMILY MEMBER"/>
    <property type="match status" value="1"/>
</dbReference>
<dbReference type="Pfam" id="PF07052">
    <property type="entry name" value="Hep_59"/>
    <property type="match status" value="1"/>
</dbReference>
<proteinExistence type="evidence at protein level"/>
<feature type="chain" id="PRO_0000116466" description="Splicing factor tls1">
    <location>
        <begin position="1"/>
        <end position="254"/>
    </location>
</feature>
<feature type="region of interest" description="Disordered" evidence="1">
    <location>
        <begin position="69"/>
        <end position="90"/>
    </location>
</feature>
<feature type="region of interest" description="Disordered" evidence="1">
    <location>
        <begin position="195"/>
        <end position="216"/>
    </location>
</feature>
<feature type="compositionally biased region" description="Basic and acidic residues" evidence="1">
    <location>
        <begin position="69"/>
        <end position="83"/>
    </location>
</feature>
<feature type="compositionally biased region" description="Basic residues" evidence="1">
    <location>
        <begin position="195"/>
        <end position="204"/>
    </location>
</feature>
<feature type="compositionally biased region" description="Basic and acidic residues" evidence="1">
    <location>
        <begin position="205"/>
        <end position="216"/>
    </location>
</feature>
<keyword id="KW-0963">Cytoplasm</keyword>
<keyword id="KW-0507">mRNA processing</keyword>
<keyword id="KW-0508">mRNA splicing</keyword>
<keyword id="KW-0539">Nucleus</keyword>
<keyword id="KW-1185">Reference proteome</keyword>
<keyword id="KW-0747">Spliceosome</keyword>
<protein>
    <recommendedName>
        <fullName evidence="7">Splicing factor tls1</fullName>
    </recommendedName>
    <alternativeName>
        <fullName evidence="5">Telomere length and silencing protein 1</fullName>
    </alternativeName>
</protein>